<name>CSRA_YERP3</name>
<proteinExistence type="inferred from homology"/>
<sequence>MLILTRRVGETLMIGDEVTVTVLGVKGNQVRIGVNAPKEVSVHREEIYQRIQAEKSQPTTY</sequence>
<evidence type="ECO:0000255" key="1">
    <source>
        <dbReference type="HAMAP-Rule" id="MF_00167"/>
    </source>
</evidence>
<protein>
    <recommendedName>
        <fullName evidence="1">Translational regulator CsrA</fullName>
    </recommendedName>
    <alternativeName>
        <fullName evidence="1">Carbon storage regulator</fullName>
    </alternativeName>
</protein>
<dbReference type="EMBL" id="CP000720">
    <property type="protein sequence ID" value="ABS46220.1"/>
    <property type="molecule type" value="Genomic_DNA"/>
</dbReference>
<dbReference type="RefSeq" id="WP_002209449.1">
    <property type="nucleotide sequence ID" value="NC_009708.1"/>
</dbReference>
<dbReference type="SMR" id="A7FLR6"/>
<dbReference type="GeneID" id="97457422"/>
<dbReference type="KEGG" id="ypi:YpsIP31758_3237"/>
<dbReference type="HOGENOM" id="CLU_164837_2_1_6"/>
<dbReference type="Proteomes" id="UP000002412">
    <property type="component" value="Chromosome"/>
</dbReference>
<dbReference type="GO" id="GO:0005829">
    <property type="term" value="C:cytosol"/>
    <property type="evidence" value="ECO:0007669"/>
    <property type="project" value="TreeGrafter"/>
</dbReference>
<dbReference type="GO" id="GO:0048027">
    <property type="term" value="F:mRNA 5'-UTR binding"/>
    <property type="evidence" value="ECO:0007669"/>
    <property type="project" value="UniProtKB-UniRule"/>
</dbReference>
<dbReference type="GO" id="GO:0006402">
    <property type="term" value="P:mRNA catabolic process"/>
    <property type="evidence" value="ECO:0007669"/>
    <property type="project" value="InterPro"/>
</dbReference>
<dbReference type="GO" id="GO:0045947">
    <property type="term" value="P:negative regulation of translational initiation"/>
    <property type="evidence" value="ECO:0007669"/>
    <property type="project" value="UniProtKB-UniRule"/>
</dbReference>
<dbReference type="GO" id="GO:0045948">
    <property type="term" value="P:positive regulation of translational initiation"/>
    <property type="evidence" value="ECO:0007669"/>
    <property type="project" value="UniProtKB-UniRule"/>
</dbReference>
<dbReference type="GO" id="GO:0006109">
    <property type="term" value="P:regulation of carbohydrate metabolic process"/>
    <property type="evidence" value="ECO:0007669"/>
    <property type="project" value="UniProtKB-UniRule"/>
</dbReference>
<dbReference type="FunFam" id="2.60.40.4380:FF:000001">
    <property type="entry name" value="Translational regulator CsrA"/>
    <property type="match status" value="1"/>
</dbReference>
<dbReference type="Gene3D" id="2.60.40.4380">
    <property type="entry name" value="Translational regulator CsrA"/>
    <property type="match status" value="1"/>
</dbReference>
<dbReference type="HAMAP" id="MF_00167">
    <property type="entry name" value="CsrA"/>
    <property type="match status" value="1"/>
</dbReference>
<dbReference type="InterPro" id="IPR003751">
    <property type="entry name" value="CsrA"/>
</dbReference>
<dbReference type="InterPro" id="IPR036107">
    <property type="entry name" value="CsrA_sf"/>
</dbReference>
<dbReference type="NCBIfam" id="TIGR00202">
    <property type="entry name" value="csrA"/>
    <property type="match status" value="1"/>
</dbReference>
<dbReference type="NCBIfam" id="NF002469">
    <property type="entry name" value="PRK01712.1"/>
    <property type="match status" value="1"/>
</dbReference>
<dbReference type="PANTHER" id="PTHR34984">
    <property type="entry name" value="CARBON STORAGE REGULATOR"/>
    <property type="match status" value="1"/>
</dbReference>
<dbReference type="PANTHER" id="PTHR34984:SF1">
    <property type="entry name" value="CARBON STORAGE REGULATOR"/>
    <property type="match status" value="1"/>
</dbReference>
<dbReference type="Pfam" id="PF02599">
    <property type="entry name" value="CsrA"/>
    <property type="match status" value="1"/>
</dbReference>
<dbReference type="SUPFAM" id="SSF117130">
    <property type="entry name" value="CsrA-like"/>
    <property type="match status" value="1"/>
</dbReference>
<feature type="chain" id="PRO_1000058272" description="Translational regulator CsrA">
    <location>
        <begin position="1"/>
        <end position="61"/>
    </location>
</feature>
<gene>
    <name evidence="1" type="primary">csrA</name>
    <name type="ordered locus">YpsIP31758_3237</name>
</gene>
<reference key="1">
    <citation type="journal article" date="2007" name="PLoS Genet.">
        <title>The complete genome sequence of Yersinia pseudotuberculosis IP31758, the causative agent of Far East scarlet-like fever.</title>
        <authorList>
            <person name="Eppinger M."/>
            <person name="Rosovitz M.J."/>
            <person name="Fricke W.F."/>
            <person name="Rasko D.A."/>
            <person name="Kokorina G."/>
            <person name="Fayolle C."/>
            <person name="Lindler L.E."/>
            <person name="Carniel E."/>
            <person name="Ravel J."/>
        </authorList>
    </citation>
    <scope>NUCLEOTIDE SEQUENCE [LARGE SCALE GENOMIC DNA]</scope>
    <source>
        <strain>IP 31758</strain>
    </source>
</reference>
<organism>
    <name type="scientific">Yersinia pseudotuberculosis serotype O:1b (strain IP 31758)</name>
    <dbReference type="NCBI Taxonomy" id="349747"/>
    <lineage>
        <taxon>Bacteria</taxon>
        <taxon>Pseudomonadati</taxon>
        <taxon>Pseudomonadota</taxon>
        <taxon>Gammaproteobacteria</taxon>
        <taxon>Enterobacterales</taxon>
        <taxon>Yersiniaceae</taxon>
        <taxon>Yersinia</taxon>
    </lineage>
</organism>
<comment type="function">
    <text evidence="1">A key translational regulator that binds mRNA to regulate translation initiation and/or mRNA stability. Mediates global changes in gene expression, shifting from rapid growth to stress survival by linking envelope stress, the stringent response and the catabolite repression systems. Usually binds in the 5'-UTR; binding at or near the Shine-Dalgarno sequence prevents ribosome-binding, repressing translation, binding elsewhere in the 5'-UTR can activate translation and/or stabilize the mRNA. Its function is antagonized by small RNA(s).</text>
</comment>
<comment type="subunit">
    <text evidence="1">Homodimer; the beta-strands of each monomer intercalate to form a hydrophobic core, while the alpha-helices form wings that extend away from the core.</text>
</comment>
<comment type="subcellular location">
    <subcellularLocation>
        <location evidence="1">Cytoplasm</location>
    </subcellularLocation>
</comment>
<comment type="similarity">
    <text evidence="1">Belongs to the CsrA/RsmA family.</text>
</comment>
<accession>A7FLR6</accession>
<keyword id="KW-0010">Activator</keyword>
<keyword id="KW-0963">Cytoplasm</keyword>
<keyword id="KW-0678">Repressor</keyword>
<keyword id="KW-0694">RNA-binding</keyword>
<keyword id="KW-0810">Translation regulation</keyword>